<accession>P85550</accession>
<evidence type="ECO:0000250" key="1">
    <source>
        <dbReference type="UniProtKB" id="P41493"/>
    </source>
</evidence>
<evidence type="ECO:0000255" key="2"/>
<evidence type="ECO:0000269" key="3">
    <source>
    </source>
</evidence>
<evidence type="ECO:0000303" key="4">
    <source>
    </source>
</evidence>
<evidence type="ECO:0000305" key="5"/>
<protein>
    <recommendedName>
        <fullName evidence="4">Sulfakinin-1</fullName>
        <shortName evidence="4">BlaDu-SK-1</shortName>
    </recommendedName>
</protein>
<reference evidence="5" key="1">
    <citation type="journal article" date="2009" name="BMC Evol. Biol.">
        <title>A proteomic approach for studying insect phylogeny: CAPA peptides of ancient insect taxa (Dictyoptera, Blattoptera) as a test case.</title>
        <authorList>
            <person name="Roth S."/>
            <person name="Fromm B."/>
            <person name="Gaede G."/>
            <person name="Predel R."/>
        </authorList>
    </citation>
    <scope>PROTEIN SEQUENCE</scope>
    <scope>AMIDATION AT PHE-11</scope>
    <source>
        <tissue evidence="3">Corpora cardiaca</tissue>
    </source>
</reference>
<sequence length="11" mass="1459">EQFEDYGHMRF</sequence>
<proteinExistence type="evidence at protein level"/>
<keyword id="KW-0027">Amidation</keyword>
<keyword id="KW-0903">Direct protein sequencing</keyword>
<keyword id="KW-0372">Hormone</keyword>
<keyword id="KW-0527">Neuropeptide</keyword>
<keyword id="KW-0964">Secreted</keyword>
<keyword id="KW-0765">Sulfation</keyword>
<feature type="peptide" id="PRO_0000378862" description="Sulfakinin-1" evidence="3">
    <location>
        <begin position="1"/>
        <end position="11"/>
    </location>
</feature>
<feature type="modified residue" description="Sulfotyrosine" evidence="1">
    <location>
        <position position="6"/>
    </location>
</feature>
<feature type="modified residue" description="Phenylalanine amide" evidence="3">
    <location>
        <position position="11"/>
    </location>
</feature>
<organism>
    <name type="scientific">Blaptica dubia</name>
    <name type="common">Argentinian wood cockroach</name>
    <dbReference type="NCBI Taxonomy" id="132935"/>
    <lineage>
        <taxon>Eukaryota</taxon>
        <taxon>Metazoa</taxon>
        <taxon>Ecdysozoa</taxon>
        <taxon>Arthropoda</taxon>
        <taxon>Hexapoda</taxon>
        <taxon>Insecta</taxon>
        <taxon>Pterygota</taxon>
        <taxon>Neoptera</taxon>
        <taxon>Polyneoptera</taxon>
        <taxon>Dictyoptera</taxon>
        <taxon>Blattodea</taxon>
        <taxon>Blaberoidea</taxon>
        <taxon>Blaberidae</taxon>
        <taxon>Blaberinae</taxon>
        <taxon>Blaptica</taxon>
    </lineage>
</organism>
<dbReference type="GO" id="GO:0005576">
    <property type="term" value="C:extracellular region"/>
    <property type="evidence" value="ECO:0007669"/>
    <property type="project" value="UniProtKB-SubCell"/>
</dbReference>
<dbReference type="GO" id="GO:0005179">
    <property type="term" value="F:hormone activity"/>
    <property type="evidence" value="ECO:0007669"/>
    <property type="project" value="UniProtKB-KW"/>
</dbReference>
<dbReference type="GO" id="GO:0007218">
    <property type="term" value="P:neuropeptide signaling pathway"/>
    <property type="evidence" value="ECO:0007669"/>
    <property type="project" value="UniProtKB-KW"/>
</dbReference>
<dbReference type="InterPro" id="IPR013152">
    <property type="entry name" value="Gastrin/cholecystokinin_CS"/>
</dbReference>
<dbReference type="InterPro" id="IPR013259">
    <property type="entry name" value="Sulfakinin"/>
</dbReference>
<dbReference type="Pfam" id="PF08257">
    <property type="entry name" value="Sulfakinin"/>
    <property type="match status" value="1"/>
</dbReference>
<dbReference type="PROSITE" id="PS00259">
    <property type="entry name" value="GASTRIN"/>
    <property type="match status" value="1"/>
</dbReference>
<comment type="function">
    <text evidence="1">Myotropic peptide.</text>
</comment>
<comment type="subcellular location">
    <subcellularLocation>
        <location evidence="5">Secreted</location>
    </subcellularLocation>
</comment>
<comment type="similarity">
    <text evidence="2">Belongs to the gastrin/cholecystokinin family.</text>
</comment>
<name>SK1_BLADU</name>